<accession>C0PYS5</accession>
<organism>
    <name type="scientific">Salmonella paratyphi C (strain RKS4594)</name>
    <dbReference type="NCBI Taxonomy" id="476213"/>
    <lineage>
        <taxon>Bacteria</taxon>
        <taxon>Pseudomonadati</taxon>
        <taxon>Pseudomonadota</taxon>
        <taxon>Gammaproteobacteria</taxon>
        <taxon>Enterobacterales</taxon>
        <taxon>Enterobacteriaceae</taxon>
        <taxon>Salmonella</taxon>
    </lineage>
</organism>
<keyword id="KW-0028">Amino-acid biosynthesis</keyword>
<keyword id="KW-0170">Cobalt</keyword>
<keyword id="KW-0220">Diaminopimelate biosynthesis</keyword>
<keyword id="KW-0378">Hydrolase</keyword>
<keyword id="KW-0457">Lysine biosynthesis</keyword>
<keyword id="KW-0479">Metal-binding</keyword>
<keyword id="KW-0862">Zinc</keyword>
<proteinExistence type="inferred from homology"/>
<dbReference type="EC" id="3.5.1.18" evidence="1"/>
<dbReference type="EMBL" id="CP000857">
    <property type="protein sequence ID" value="ACN45342.1"/>
    <property type="molecule type" value="Genomic_DNA"/>
</dbReference>
<dbReference type="RefSeq" id="WP_001277823.1">
    <property type="nucleotide sequence ID" value="NC_012125.1"/>
</dbReference>
<dbReference type="SMR" id="C0PYS5"/>
<dbReference type="MEROPS" id="M20.010"/>
<dbReference type="KEGG" id="sei:SPC_1176"/>
<dbReference type="HOGENOM" id="CLU_021802_4_0_6"/>
<dbReference type="UniPathway" id="UPA00034">
    <property type="reaction ID" value="UER00021"/>
</dbReference>
<dbReference type="Proteomes" id="UP000001599">
    <property type="component" value="Chromosome"/>
</dbReference>
<dbReference type="GO" id="GO:0008777">
    <property type="term" value="F:acetylornithine deacetylase activity"/>
    <property type="evidence" value="ECO:0007669"/>
    <property type="project" value="TreeGrafter"/>
</dbReference>
<dbReference type="GO" id="GO:0050897">
    <property type="term" value="F:cobalt ion binding"/>
    <property type="evidence" value="ECO:0007669"/>
    <property type="project" value="UniProtKB-UniRule"/>
</dbReference>
<dbReference type="GO" id="GO:0009014">
    <property type="term" value="F:succinyl-diaminopimelate desuccinylase activity"/>
    <property type="evidence" value="ECO:0007669"/>
    <property type="project" value="UniProtKB-UniRule"/>
</dbReference>
<dbReference type="GO" id="GO:0008270">
    <property type="term" value="F:zinc ion binding"/>
    <property type="evidence" value="ECO:0007669"/>
    <property type="project" value="UniProtKB-UniRule"/>
</dbReference>
<dbReference type="GO" id="GO:0019877">
    <property type="term" value="P:diaminopimelate biosynthetic process"/>
    <property type="evidence" value="ECO:0007669"/>
    <property type="project" value="UniProtKB-UniRule"/>
</dbReference>
<dbReference type="GO" id="GO:0006526">
    <property type="term" value="P:L-arginine biosynthetic process"/>
    <property type="evidence" value="ECO:0007669"/>
    <property type="project" value="TreeGrafter"/>
</dbReference>
<dbReference type="GO" id="GO:0009089">
    <property type="term" value="P:lysine biosynthetic process via diaminopimelate"/>
    <property type="evidence" value="ECO:0007669"/>
    <property type="project" value="UniProtKB-UniRule"/>
</dbReference>
<dbReference type="CDD" id="cd03891">
    <property type="entry name" value="M20_DapE_proteobac"/>
    <property type="match status" value="1"/>
</dbReference>
<dbReference type="FunFam" id="3.30.70.360:FF:000011">
    <property type="entry name" value="Succinyl-diaminopimelate desuccinylase"/>
    <property type="match status" value="1"/>
</dbReference>
<dbReference type="FunFam" id="3.40.630.10:FF:000005">
    <property type="entry name" value="Succinyl-diaminopimelate desuccinylase"/>
    <property type="match status" value="1"/>
</dbReference>
<dbReference type="FunFam" id="3.40.630.10:FF:000010">
    <property type="entry name" value="Succinyl-diaminopimelate desuccinylase"/>
    <property type="match status" value="1"/>
</dbReference>
<dbReference type="Gene3D" id="3.40.630.10">
    <property type="entry name" value="Zn peptidases"/>
    <property type="match status" value="2"/>
</dbReference>
<dbReference type="HAMAP" id="MF_01690">
    <property type="entry name" value="DapE"/>
    <property type="match status" value="1"/>
</dbReference>
<dbReference type="InterPro" id="IPR001261">
    <property type="entry name" value="ArgE/DapE_CS"/>
</dbReference>
<dbReference type="InterPro" id="IPR036264">
    <property type="entry name" value="Bact_exopeptidase_dim_dom"/>
</dbReference>
<dbReference type="InterPro" id="IPR005941">
    <property type="entry name" value="DapE_proteobac"/>
</dbReference>
<dbReference type="InterPro" id="IPR002933">
    <property type="entry name" value="Peptidase_M20"/>
</dbReference>
<dbReference type="InterPro" id="IPR011650">
    <property type="entry name" value="Peptidase_M20_dimer"/>
</dbReference>
<dbReference type="InterPro" id="IPR050072">
    <property type="entry name" value="Peptidase_M20A"/>
</dbReference>
<dbReference type="NCBIfam" id="TIGR01246">
    <property type="entry name" value="dapE_proteo"/>
    <property type="match status" value="1"/>
</dbReference>
<dbReference type="NCBIfam" id="NF009557">
    <property type="entry name" value="PRK13009.1"/>
    <property type="match status" value="1"/>
</dbReference>
<dbReference type="PANTHER" id="PTHR43808">
    <property type="entry name" value="ACETYLORNITHINE DEACETYLASE"/>
    <property type="match status" value="1"/>
</dbReference>
<dbReference type="PANTHER" id="PTHR43808:SF31">
    <property type="entry name" value="N-ACETYL-L-CITRULLINE DEACETYLASE"/>
    <property type="match status" value="1"/>
</dbReference>
<dbReference type="Pfam" id="PF07687">
    <property type="entry name" value="M20_dimer"/>
    <property type="match status" value="1"/>
</dbReference>
<dbReference type="Pfam" id="PF01546">
    <property type="entry name" value="Peptidase_M20"/>
    <property type="match status" value="1"/>
</dbReference>
<dbReference type="SUPFAM" id="SSF55031">
    <property type="entry name" value="Bacterial exopeptidase dimerisation domain"/>
    <property type="match status" value="1"/>
</dbReference>
<dbReference type="SUPFAM" id="SSF53187">
    <property type="entry name" value="Zn-dependent exopeptidases"/>
    <property type="match status" value="1"/>
</dbReference>
<dbReference type="PROSITE" id="PS00758">
    <property type="entry name" value="ARGE_DAPE_CPG2_1"/>
    <property type="match status" value="1"/>
</dbReference>
<dbReference type="PROSITE" id="PS00759">
    <property type="entry name" value="ARGE_DAPE_CPG2_2"/>
    <property type="match status" value="1"/>
</dbReference>
<sequence length="375" mass="41560">MSCPVIELTQQLIRRPSLSPDDAGCQALMIERLRKIGFTIEHMDFGDTQNFWAWRGRGETLAFAGHTDVVPAGDVDRWINPPFEPTIRDGMLFGRGAADMKGSLAAMVVAAERFVAQHPHHRGRLAFLITSDEEASAKNGTVKVVEALMARNERLDYCLVGEPSSTEIVGDVVKNGRRGSLTCNLTIHGVQGHVAYPHLADNPVHRAAPFLNELVAIEWDRGNDFFPATSMQVANIQAGTGSNNVIPGELFVQFNFRFSTELTDEIIKERVHALLEKHQLRYTVDWWLSGQPFLTARGKLVDAVVNAIEHYNEIKPQLLTTGGTSDGRFIARMGAQVVELGPVNATIHKINECVNAADLQLLARMYQRIMEQLVA</sequence>
<protein>
    <recommendedName>
        <fullName evidence="1">Succinyl-diaminopimelate desuccinylase</fullName>
        <shortName evidence="1">SDAP desuccinylase</shortName>
        <ecNumber evidence="1">3.5.1.18</ecNumber>
    </recommendedName>
    <alternativeName>
        <fullName evidence="1">N-succinyl-LL-2,6-diaminoheptanedioate amidohydrolase</fullName>
    </alternativeName>
</protein>
<reference key="1">
    <citation type="journal article" date="2009" name="PLoS ONE">
        <title>Salmonella paratyphi C: genetic divergence from Salmonella choleraesuis and pathogenic convergence with Salmonella typhi.</title>
        <authorList>
            <person name="Liu W.-Q."/>
            <person name="Feng Y."/>
            <person name="Wang Y."/>
            <person name="Zou Q.-H."/>
            <person name="Chen F."/>
            <person name="Guo J.-T."/>
            <person name="Peng Y.-H."/>
            <person name="Jin Y."/>
            <person name="Li Y.-G."/>
            <person name="Hu S.-N."/>
            <person name="Johnston R.N."/>
            <person name="Liu G.-R."/>
            <person name="Liu S.-L."/>
        </authorList>
    </citation>
    <scope>NUCLEOTIDE SEQUENCE [LARGE SCALE GENOMIC DNA]</scope>
    <source>
        <strain>RKS4594</strain>
    </source>
</reference>
<gene>
    <name evidence="1" type="primary">dapE</name>
    <name type="ordered locus">SPC_1176</name>
</gene>
<evidence type="ECO:0000255" key="1">
    <source>
        <dbReference type="HAMAP-Rule" id="MF_01690"/>
    </source>
</evidence>
<comment type="function">
    <text evidence="1">Catalyzes the hydrolysis of N-succinyl-L,L-diaminopimelic acid (SDAP), forming succinate and LL-2,6-diaminopimelate (DAP), an intermediate involved in the bacterial biosynthesis of lysine and meso-diaminopimelic acid, an essential component of bacterial cell walls.</text>
</comment>
<comment type="catalytic activity">
    <reaction evidence="1">
        <text>N-succinyl-(2S,6S)-2,6-diaminopimelate + H2O = (2S,6S)-2,6-diaminopimelate + succinate</text>
        <dbReference type="Rhea" id="RHEA:22608"/>
        <dbReference type="ChEBI" id="CHEBI:15377"/>
        <dbReference type="ChEBI" id="CHEBI:30031"/>
        <dbReference type="ChEBI" id="CHEBI:57609"/>
        <dbReference type="ChEBI" id="CHEBI:58087"/>
        <dbReference type="EC" id="3.5.1.18"/>
    </reaction>
</comment>
<comment type="cofactor">
    <cofactor evidence="1">
        <name>Zn(2+)</name>
        <dbReference type="ChEBI" id="CHEBI:29105"/>
    </cofactor>
    <cofactor evidence="1">
        <name>Co(2+)</name>
        <dbReference type="ChEBI" id="CHEBI:48828"/>
    </cofactor>
    <text evidence="1">Binds 2 Zn(2+) or Co(2+) ions per subunit.</text>
</comment>
<comment type="pathway">
    <text evidence="1">Amino-acid biosynthesis; L-lysine biosynthesis via DAP pathway; LL-2,6-diaminopimelate from (S)-tetrahydrodipicolinate (succinylase route): step 3/3.</text>
</comment>
<comment type="subunit">
    <text evidence="1">Homodimer.</text>
</comment>
<comment type="similarity">
    <text evidence="1">Belongs to the peptidase M20A family. DapE subfamily.</text>
</comment>
<feature type="chain" id="PRO_1000187445" description="Succinyl-diaminopimelate desuccinylase">
    <location>
        <begin position="1"/>
        <end position="375"/>
    </location>
</feature>
<feature type="active site" evidence="1">
    <location>
        <position position="68"/>
    </location>
</feature>
<feature type="active site" description="Proton acceptor" evidence="1">
    <location>
        <position position="133"/>
    </location>
</feature>
<feature type="binding site" evidence="1">
    <location>
        <position position="66"/>
    </location>
    <ligand>
        <name>Zn(2+)</name>
        <dbReference type="ChEBI" id="CHEBI:29105"/>
        <label>1</label>
    </ligand>
</feature>
<feature type="binding site" evidence="1">
    <location>
        <position position="99"/>
    </location>
    <ligand>
        <name>Zn(2+)</name>
        <dbReference type="ChEBI" id="CHEBI:29105"/>
        <label>1</label>
    </ligand>
</feature>
<feature type="binding site" evidence="1">
    <location>
        <position position="99"/>
    </location>
    <ligand>
        <name>Zn(2+)</name>
        <dbReference type="ChEBI" id="CHEBI:29105"/>
        <label>2</label>
    </ligand>
</feature>
<feature type="binding site" evidence="1">
    <location>
        <position position="134"/>
    </location>
    <ligand>
        <name>Zn(2+)</name>
        <dbReference type="ChEBI" id="CHEBI:29105"/>
        <label>2</label>
    </ligand>
</feature>
<feature type="binding site" evidence="1">
    <location>
        <position position="162"/>
    </location>
    <ligand>
        <name>Zn(2+)</name>
        <dbReference type="ChEBI" id="CHEBI:29105"/>
        <label>1</label>
    </ligand>
</feature>
<feature type="binding site" evidence="1">
    <location>
        <position position="348"/>
    </location>
    <ligand>
        <name>Zn(2+)</name>
        <dbReference type="ChEBI" id="CHEBI:29105"/>
        <label>2</label>
    </ligand>
</feature>
<name>DAPE_SALPC</name>